<keyword id="KW-0025">Alternative splicing</keyword>
<keyword id="KW-0325">Glycoprotein</keyword>
<keyword id="KW-0430">Lectin</keyword>
<keyword id="KW-0472">Membrane</keyword>
<keyword id="KW-1185">Reference proteome</keyword>
<keyword id="KW-0735">Signal-anchor</keyword>
<keyword id="KW-0812">Transmembrane</keyword>
<keyword id="KW-1133">Transmembrane helix</keyword>
<evidence type="ECO:0000255" key="1"/>
<evidence type="ECO:0000256" key="2">
    <source>
        <dbReference type="SAM" id="MobiDB-lite"/>
    </source>
</evidence>
<evidence type="ECO:0000269" key="3">
    <source>
    </source>
</evidence>
<evidence type="ECO:0000269" key="4">
    <source>
    </source>
</evidence>
<evidence type="ECO:0000269" key="5">
    <source>
    </source>
</evidence>
<evidence type="ECO:0000269" key="6">
    <source>
    </source>
</evidence>
<evidence type="ECO:0000303" key="7">
    <source>
    </source>
</evidence>
<evidence type="ECO:0000303" key="8">
    <source>
    </source>
</evidence>
<evidence type="ECO:0000305" key="9"/>
<evidence type="ECO:0000312" key="10">
    <source>
        <dbReference type="EMBL" id="AAB04114.1"/>
    </source>
</evidence>
<evidence type="ECO:0000312" key="11">
    <source>
        <dbReference type="EMBL" id="AAF55926.1"/>
    </source>
</evidence>
<evidence type="ECO:0000312" key="12">
    <source>
        <dbReference type="EMBL" id="AAL39267.1"/>
    </source>
</evidence>
<evidence type="ECO:0000312" key="13">
    <source>
        <dbReference type="EMBL" id="ABY20530.1"/>
    </source>
</evidence>
<proteinExistence type="evidence at protein level"/>
<organism>
    <name type="scientific">Drosophila melanogaster</name>
    <name type="common">Fruit fly</name>
    <dbReference type="NCBI Taxonomy" id="7227"/>
    <lineage>
        <taxon>Eukaryota</taxon>
        <taxon>Metazoa</taxon>
        <taxon>Ecdysozoa</taxon>
        <taxon>Arthropoda</taxon>
        <taxon>Hexapoda</taxon>
        <taxon>Insecta</taxon>
        <taxon>Pterygota</taxon>
        <taxon>Neoptera</taxon>
        <taxon>Endopterygota</taxon>
        <taxon>Diptera</taxon>
        <taxon>Brachycera</taxon>
        <taxon>Muscomorpha</taxon>
        <taxon>Ephydroidea</taxon>
        <taxon>Drosophilidae</taxon>
        <taxon>Drosophila</taxon>
        <taxon>Sophophora</taxon>
    </lineage>
</organism>
<comment type="function">
    <text evidence="4 6">Has a role in intercellular carbohydrate-mediated cell adhesion.</text>
</comment>
<comment type="subcellular location">
    <subcellularLocation>
        <location evidence="6">Membrane</location>
        <topology evidence="6">Single-pass type II membrane protein</topology>
    </subcellularLocation>
</comment>
<comment type="alternative products">
    <event type="alternative splicing"/>
    <isoform>
        <id>Q9VD73-1</id>
        <name evidence="6">A</name>
        <sequence type="displayed"/>
    </isoform>
    <isoform>
        <id>Q9VD73-2</id>
        <name evidence="5">B</name>
        <sequence type="described" ref="VSP_052894"/>
    </isoform>
</comment>
<comment type="tissue specificity">
    <text evidence="4 6">Expressed by a subset of glial cells found at the midline of the embryo stage 12 nervous system. Expression is highest during the formation of the embryonic axonal commissures, a process requiring midline glial cell function (at protein level).</text>
</comment>
<comment type="disruption phenotype">
    <text evidence="4">Flies exhibit disruption of the formation of commissural pathways and shows delays the completion of longitudinal pathfinding. The disruption in commissure formation is accompanied by reduced axon-glial contact, such that extending axons grow on other axons and form a tightly fasciculated bundle that arches over the midline.</text>
</comment>
<name>GLEC_DROME</name>
<gene>
    <name evidence="11" type="primary">glec</name>
    <name type="ORF">CG6575</name>
</gene>
<sequence>MLCPPMALGPFLAAPVPRPPPSASEKKRICRNLFNNAPGDSNIDQLLAQEQHTQRLYVKERYGYDIQLESNRDADANTDADADTDAHCQVLRGMRYPTSRTISSTDADECNPKAVSQAPRGMALTPAQISASAKLILQKCPESDRKKSNGSADLANCTRHGQKPYARQPQGLKGMYNVRKTVNGISKPNVKNGYNNNNNSSSSNNNSNMNINNKIVDNGTSELADQKQ</sequence>
<feature type="chain" id="PRO_0000347283" description="Gliolectin">
    <location>
        <begin position="1"/>
        <end position="228"/>
    </location>
</feature>
<feature type="topological domain" description="Cytoplasmic" evidence="1">
    <location>
        <begin position="1"/>
        <end position="120"/>
    </location>
</feature>
<feature type="transmembrane region" description="Helical; Signal-anchor for type II membrane protein" evidence="1">
    <location>
        <begin position="121"/>
        <end position="137"/>
    </location>
</feature>
<feature type="topological domain" description="Extracellular" evidence="1">
    <location>
        <begin position="138"/>
        <end position="228"/>
    </location>
</feature>
<feature type="region of interest" description="Disordered" evidence="2">
    <location>
        <begin position="141"/>
        <end position="228"/>
    </location>
</feature>
<feature type="compositionally biased region" description="Low complexity" evidence="2">
    <location>
        <begin position="195"/>
        <end position="213"/>
    </location>
</feature>
<feature type="compositionally biased region" description="Polar residues" evidence="2">
    <location>
        <begin position="218"/>
        <end position="228"/>
    </location>
</feature>
<feature type="glycosylation site" description="N-linked (GlcNAc...) asparagine" evidence="1">
    <location>
        <position position="149"/>
    </location>
</feature>
<feature type="glycosylation site" description="N-linked (GlcNAc...) asparagine" evidence="1">
    <location>
        <position position="156"/>
    </location>
</feature>
<feature type="glycosylation site" description="N-linked (GlcNAc...) asparagine" evidence="1">
    <location>
        <position position="198"/>
    </location>
</feature>
<feature type="glycosylation site" description="N-linked (GlcNAc...) asparagine" evidence="1">
    <location>
        <position position="199"/>
    </location>
</feature>
<feature type="glycosylation site" description="N-linked (GlcNAc...) asparagine" evidence="1">
    <location>
        <position position="205"/>
    </location>
</feature>
<feature type="glycosylation site" description="N-linked (GlcNAc...) asparagine" evidence="1">
    <location>
        <position position="218"/>
    </location>
</feature>
<feature type="splice variant" id="VSP_052894" description="In isoform B." evidence="7">
    <original>MYNVRKTVNGISKPNVKNGYNNNNNSSSSNNNSNMNINNKIVDNGTSELADQKQ</original>
    <variation>RFFFSMICMFLFHLKRWVLAQNIRIMITLWFQVIKFNILSSYC</variation>
    <location>
        <begin position="175"/>
        <end position="228"/>
    </location>
</feature>
<feature type="sequence conflict" description="In Ref. 5; ABY20530." evidence="9" ref="5">
    <original>Q</original>
    <variation>H</variation>
    <location>
        <position position="49"/>
    </location>
</feature>
<feature type="sequence conflict" description="In Ref. 1; AAB04114." evidence="9" ref="1">
    <original>A</original>
    <variation>P</variation>
    <location>
        <position position="80"/>
    </location>
</feature>
<feature type="sequence conflict" description="In Ref. 1; AAB04114." evidence="9" ref="1">
    <original>A</original>
    <variation>T</variation>
    <location>
        <position position="107"/>
    </location>
</feature>
<feature type="sequence conflict" description="In Ref. 1; AAB04114." evidence="9" ref="1">
    <original>K</original>
    <variation>Q</variation>
    <location>
        <position position="134"/>
    </location>
</feature>
<dbReference type="EMBL" id="U42989">
    <property type="protein sequence ID" value="AAB04114.1"/>
    <property type="molecule type" value="mRNA"/>
</dbReference>
<dbReference type="EMBL" id="AE014297">
    <property type="protein sequence ID" value="AAF55926.1"/>
    <property type="molecule type" value="Genomic_DNA"/>
</dbReference>
<dbReference type="EMBL" id="AY069122">
    <property type="protein sequence ID" value="AAL39267.1"/>
    <property type="molecule type" value="mRNA"/>
</dbReference>
<dbReference type="EMBL" id="BT031289">
    <property type="protein sequence ID" value="ABY20530.1"/>
    <property type="molecule type" value="mRNA"/>
</dbReference>
<dbReference type="RefSeq" id="NP_524443.2">
    <molecule id="Q9VD73-1"/>
    <property type="nucleotide sequence ID" value="NM_079719.3"/>
</dbReference>
<dbReference type="SMR" id="Q9VD73"/>
<dbReference type="BioGRID" id="67533">
    <property type="interactions" value="4"/>
</dbReference>
<dbReference type="FunCoup" id="Q9VD73">
    <property type="interactions" value="18"/>
</dbReference>
<dbReference type="IntAct" id="Q9VD73">
    <property type="interactions" value="8"/>
</dbReference>
<dbReference type="STRING" id="7227.FBpp0083555"/>
<dbReference type="GlyCosmos" id="Q9VD73">
    <property type="glycosylation" value="6 sites, No reported glycans"/>
</dbReference>
<dbReference type="GlyGen" id="Q9VD73">
    <property type="glycosylation" value="6 sites"/>
</dbReference>
<dbReference type="PaxDb" id="7227-FBpp0083555"/>
<dbReference type="DNASU" id="42571"/>
<dbReference type="EnsemblMetazoa" id="FBtr0084157">
    <molecule id="Q9VD73-1"/>
    <property type="protein sequence ID" value="FBpp0083555"/>
    <property type="gene ID" value="FBgn0015229"/>
</dbReference>
<dbReference type="GeneID" id="42571"/>
<dbReference type="KEGG" id="dme:Dmel_CG6575"/>
<dbReference type="UCSC" id="CG6575-RA">
    <molecule id="Q9VD73-1"/>
    <property type="organism name" value="d. melanogaster"/>
</dbReference>
<dbReference type="AGR" id="FB:FBgn0015229"/>
<dbReference type="CTD" id="42571"/>
<dbReference type="FlyBase" id="FBgn0015229">
    <property type="gene designation" value="glec"/>
</dbReference>
<dbReference type="VEuPathDB" id="VectorBase:FBgn0015229"/>
<dbReference type="HOGENOM" id="CLU_1251842_0_0_1"/>
<dbReference type="InParanoid" id="Q9VD73"/>
<dbReference type="OMA" id="DECNPKA"/>
<dbReference type="OrthoDB" id="7865833at2759"/>
<dbReference type="PhylomeDB" id="Q9VD73"/>
<dbReference type="BioGRID-ORCS" id="42571">
    <property type="hits" value="0 hits in 1 CRISPR screen"/>
</dbReference>
<dbReference type="ChiTaRS" id="glec">
    <property type="organism name" value="fly"/>
</dbReference>
<dbReference type="GenomeRNAi" id="42571"/>
<dbReference type="PRO" id="PR:Q9VD73"/>
<dbReference type="Proteomes" id="UP000000803">
    <property type="component" value="Chromosome 3R"/>
</dbReference>
<dbReference type="Bgee" id="FBgn0015229">
    <property type="expression patterns" value="Expressed in hemocyte (sensu Nematoda and Protostomia) in insect leg and 285 other cell types or tissues"/>
</dbReference>
<dbReference type="ExpressionAtlas" id="Q9VD73">
    <property type="expression patterns" value="baseline and differential"/>
</dbReference>
<dbReference type="GO" id="GO:0016020">
    <property type="term" value="C:membrane"/>
    <property type="evidence" value="ECO:0000250"/>
    <property type="project" value="FlyBase"/>
</dbReference>
<dbReference type="GO" id="GO:0005654">
    <property type="term" value="C:nucleoplasm"/>
    <property type="evidence" value="ECO:0007005"/>
    <property type="project" value="FlyBase"/>
</dbReference>
<dbReference type="GO" id="GO:0005886">
    <property type="term" value="C:plasma membrane"/>
    <property type="evidence" value="ECO:0000314"/>
    <property type="project" value="UniProtKB"/>
</dbReference>
<dbReference type="GO" id="GO:0030246">
    <property type="term" value="F:carbohydrate binding"/>
    <property type="evidence" value="ECO:0000314"/>
    <property type="project" value="FlyBase"/>
</dbReference>
<dbReference type="GO" id="GO:0007155">
    <property type="term" value="P:cell adhesion"/>
    <property type="evidence" value="ECO:0000315"/>
    <property type="project" value="UniProtKB"/>
</dbReference>
<dbReference type="GO" id="GO:0007157">
    <property type="term" value="P:heterophilic cell-cell adhesion via plasma membrane cell adhesion molecules"/>
    <property type="evidence" value="ECO:0000315"/>
    <property type="project" value="FlyBase"/>
</dbReference>
<dbReference type="GO" id="GO:0007399">
    <property type="term" value="P:nervous system development"/>
    <property type="evidence" value="ECO:0000315"/>
    <property type="project" value="FlyBase"/>
</dbReference>
<protein>
    <recommendedName>
        <fullName evidence="8">Gliolectin</fullName>
    </recommendedName>
</protein>
<reference evidence="9 10" key="1">
    <citation type="journal article" date="1996" name="Development">
        <title>Gliolectin is a novel carbohydrate-binding protein expressed by a subset of glia in the embryonic Drosophila nervous system.</title>
        <authorList>
            <person name="Tiemeyer M."/>
            <person name="Goodman C.S."/>
        </authorList>
    </citation>
    <scope>NUCLEOTIDE SEQUENCE [MRNA] (ISOFORM A)</scope>
    <scope>FUNCTION</scope>
    <scope>SUBCELLULAR LOCATION</scope>
    <scope>TISSUE SPECIFICITY</scope>
    <source>
        <strain evidence="10">Oregon-R</strain>
        <tissue evidence="6">Embryo</tissue>
    </source>
</reference>
<reference evidence="11" key="2">
    <citation type="journal article" date="2000" name="Science">
        <title>The genome sequence of Drosophila melanogaster.</title>
        <authorList>
            <person name="Adams M.D."/>
            <person name="Celniker S.E."/>
            <person name="Holt R.A."/>
            <person name="Evans C.A."/>
            <person name="Gocayne J.D."/>
            <person name="Amanatides P.G."/>
            <person name="Scherer S.E."/>
            <person name="Li P.W."/>
            <person name="Hoskins R.A."/>
            <person name="Galle R.F."/>
            <person name="George R.A."/>
            <person name="Lewis S.E."/>
            <person name="Richards S."/>
            <person name="Ashburner M."/>
            <person name="Henderson S.N."/>
            <person name="Sutton G.G."/>
            <person name="Wortman J.R."/>
            <person name="Yandell M.D."/>
            <person name="Zhang Q."/>
            <person name="Chen L.X."/>
            <person name="Brandon R.C."/>
            <person name="Rogers Y.-H.C."/>
            <person name="Blazej R.G."/>
            <person name="Champe M."/>
            <person name="Pfeiffer B.D."/>
            <person name="Wan K.H."/>
            <person name="Doyle C."/>
            <person name="Baxter E.G."/>
            <person name="Helt G."/>
            <person name="Nelson C.R."/>
            <person name="Miklos G.L.G."/>
            <person name="Abril J.F."/>
            <person name="Agbayani A."/>
            <person name="An H.-J."/>
            <person name="Andrews-Pfannkoch C."/>
            <person name="Baldwin D."/>
            <person name="Ballew R.M."/>
            <person name="Basu A."/>
            <person name="Baxendale J."/>
            <person name="Bayraktaroglu L."/>
            <person name="Beasley E.M."/>
            <person name="Beeson K.Y."/>
            <person name="Benos P.V."/>
            <person name="Berman B.P."/>
            <person name="Bhandari D."/>
            <person name="Bolshakov S."/>
            <person name="Borkova D."/>
            <person name="Botchan M.R."/>
            <person name="Bouck J."/>
            <person name="Brokstein P."/>
            <person name="Brottier P."/>
            <person name="Burtis K.C."/>
            <person name="Busam D.A."/>
            <person name="Butler H."/>
            <person name="Cadieu E."/>
            <person name="Center A."/>
            <person name="Chandra I."/>
            <person name="Cherry J.M."/>
            <person name="Cawley S."/>
            <person name="Dahlke C."/>
            <person name="Davenport L.B."/>
            <person name="Davies P."/>
            <person name="de Pablos B."/>
            <person name="Delcher A."/>
            <person name="Deng Z."/>
            <person name="Mays A.D."/>
            <person name="Dew I."/>
            <person name="Dietz S.M."/>
            <person name="Dodson K."/>
            <person name="Doup L.E."/>
            <person name="Downes M."/>
            <person name="Dugan-Rocha S."/>
            <person name="Dunkov B.C."/>
            <person name="Dunn P."/>
            <person name="Durbin K.J."/>
            <person name="Evangelista C.C."/>
            <person name="Ferraz C."/>
            <person name="Ferriera S."/>
            <person name="Fleischmann W."/>
            <person name="Fosler C."/>
            <person name="Gabrielian A.E."/>
            <person name="Garg N.S."/>
            <person name="Gelbart W.M."/>
            <person name="Glasser K."/>
            <person name="Glodek A."/>
            <person name="Gong F."/>
            <person name="Gorrell J.H."/>
            <person name="Gu Z."/>
            <person name="Guan P."/>
            <person name="Harris M."/>
            <person name="Harris N.L."/>
            <person name="Harvey D.A."/>
            <person name="Heiman T.J."/>
            <person name="Hernandez J.R."/>
            <person name="Houck J."/>
            <person name="Hostin D."/>
            <person name="Houston K.A."/>
            <person name="Howland T.J."/>
            <person name="Wei M.-H."/>
            <person name="Ibegwam C."/>
            <person name="Jalali M."/>
            <person name="Kalush F."/>
            <person name="Karpen G.H."/>
            <person name="Ke Z."/>
            <person name="Kennison J.A."/>
            <person name="Ketchum K.A."/>
            <person name="Kimmel B.E."/>
            <person name="Kodira C.D."/>
            <person name="Kraft C.L."/>
            <person name="Kravitz S."/>
            <person name="Kulp D."/>
            <person name="Lai Z."/>
            <person name="Lasko P."/>
            <person name="Lei Y."/>
            <person name="Levitsky A.A."/>
            <person name="Li J.H."/>
            <person name="Li Z."/>
            <person name="Liang Y."/>
            <person name="Lin X."/>
            <person name="Liu X."/>
            <person name="Mattei B."/>
            <person name="McIntosh T.C."/>
            <person name="McLeod M.P."/>
            <person name="McPherson D."/>
            <person name="Merkulov G."/>
            <person name="Milshina N.V."/>
            <person name="Mobarry C."/>
            <person name="Morris J."/>
            <person name="Moshrefi A."/>
            <person name="Mount S.M."/>
            <person name="Moy M."/>
            <person name="Murphy B."/>
            <person name="Murphy L."/>
            <person name="Muzny D.M."/>
            <person name="Nelson D.L."/>
            <person name="Nelson D.R."/>
            <person name="Nelson K.A."/>
            <person name="Nixon K."/>
            <person name="Nusskern D.R."/>
            <person name="Pacleb J.M."/>
            <person name="Palazzolo M."/>
            <person name="Pittman G.S."/>
            <person name="Pan S."/>
            <person name="Pollard J."/>
            <person name="Puri V."/>
            <person name="Reese M.G."/>
            <person name="Reinert K."/>
            <person name="Remington K."/>
            <person name="Saunders R.D.C."/>
            <person name="Scheeler F."/>
            <person name="Shen H."/>
            <person name="Shue B.C."/>
            <person name="Siden-Kiamos I."/>
            <person name="Simpson M."/>
            <person name="Skupski M.P."/>
            <person name="Smith T.J."/>
            <person name="Spier E."/>
            <person name="Spradling A.C."/>
            <person name="Stapleton M."/>
            <person name="Strong R."/>
            <person name="Sun E."/>
            <person name="Svirskas R."/>
            <person name="Tector C."/>
            <person name="Turner R."/>
            <person name="Venter E."/>
            <person name="Wang A.H."/>
            <person name="Wang X."/>
            <person name="Wang Z.-Y."/>
            <person name="Wassarman D.A."/>
            <person name="Weinstock G.M."/>
            <person name="Weissenbach J."/>
            <person name="Williams S.M."/>
            <person name="Woodage T."/>
            <person name="Worley K.C."/>
            <person name="Wu D."/>
            <person name="Yang S."/>
            <person name="Yao Q.A."/>
            <person name="Ye J."/>
            <person name="Yeh R.-F."/>
            <person name="Zaveri J.S."/>
            <person name="Zhan M."/>
            <person name="Zhang G."/>
            <person name="Zhao Q."/>
            <person name="Zheng L."/>
            <person name="Zheng X.H."/>
            <person name="Zhong F.N."/>
            <person name="Zhong W."/>
            <person name="Zhou X."/>
            <person name="Zhu S.C."/>
            <person name="Zhu X."/>
            <person name="Smith H.O."/>
            <person name="Gibbs R.A."/>
            <person name="Myers E.W."/>
            <person name="Rubin G.M."/>
            <person name="Venter J.C."/>
        </authorList>
    </citation>
    <scope>NUCLEOTIDE SEQUENCE [LARGE SCALE GENOMIC DNA]</scope>
    <source>
        <strain evidence="3">Berkeley</strain>
    </source>
</reference>
<reference evidence="9 11" key="3">
    <citation type="journal article" date="2002" name="Genome Biol.">
        <title>Annotation of the Drosophila melanogaster euchromatic genome: a systematic review.</title>
        <authorList>
            <person name="Misra S."/>
            <person name="Crosby M.A."/>
            <person name="Mungall C.J."/>
            <person name="Matthews B.B."/>
            <person name="Campbell K.S."/>
            <person name="Hradecky P."/>
            <person name="Huang Y."/>
            <person name="Kaminker J.S."/>
            <person name="Millburn G.H."/>
            <person name="Prochnik S.E."/>
            <person name="Smith C.D."/>
            <person name="Tupy J.L."/>
            <person name="Whitfield E.J."/>
            <person name="Bayraktaroglu L."/>
            <person name="Berman B.P."/>
            <person name="Bettencourt B.R."/>
            <person name="Celniker S.E."/>
            <person name="de Grey A.D.N.J."/>
            <person name="Drysdale R.A."/>
            <person name="Harris N.L."/>
            <person name="Richter J."/>
            <person name="Russo S."/>
            <person name="Schroeder A.J."/>
            <person name="Shu S.Q."/>
            <person name="Stapleton M."/>
            <person name="Yamada C."/>
            <person name="Ashburner M."/>
            <person name="Gelbart W.M."/>
            <person name="Rubin G.M."/>
            <person name="Lewis S.E."/>
        </authorList>
    </citation>
    <scope>GENOME REANNOTATION</scope>
    <source>
        <strain>Berkeley</strain>
    </source>
</reference>
<reference evidence="9 12" key="4">
    <citation type="journal article" date="2002" name="Genome Biol.">
        <title>A Drosophila full-length cDNA resource.</title>
        <authorList>
            <person name="Stapleton M."/>
            <person name="Carlson J.W."/>
            <person name="Brokstein P."/>
            <person name="Yu C."/>
            <person name="Champe M."/>
            <person name="George R.A."/>
            <person name="Guarin H."/>
            <person name="Kronmiller B."/>
            <person name="Pacleb J.M."/>
            <person name="Park S."/>
            <person name="Wan K.H."/>
            <person name="Rubin G.M."/>
            <person name="Celniker S.E."/>
        </authorList>
    </citation>
    <scope>NUCLEOTIDE SEQUENCE [LARGE SCALE MRNA] (ISOFORM B)</scope>
    <source>
        <strain evidence="5">Berkeley</strain>
        <tissue evidence="5">Head</tissue>
    </source>
</reference>
<reference evidence="9 13" key="5">
    <citation type="submission" date="2007-12" db="EMBL/GenBank/DDBJ databases">
        <authorList>
            <person name="Stapleton M."/>
            <person name="Carlson J.W."/>
            <person name="Frise E."/>
            <person name="Kapadia B."/>
            <person name="Park S."/>
            <person name="Wan K.H."/>
            <person name="Yu C."/>
            <person name="Celniker S.E."/>
        </authorList>
    </citation>
    <scope>NUCLEOTIDE SEQUENCE [LARGE SCALE MRNA] (ISOFORM A)</scope>
    <source>
        <strain evidence="13">Berkeley</strain>
        <tissue>Embryo</tissue>
    </source>
</reference>
<reference evidence="9" key="6">
    <citation type="journal article" date="2001" name="Development">
        <title>Gliolectin-mediated carbohydrate binding at the Drosophila midline ensures the fidelity of axon pathfinding.</title>
        <authorList>
            <person name="Sharrow M."/>
            <person name="Tiemeyer M."/>
        </authorList>
    </citation>
    <scope>FUNCTION</scope>
    <scope>DISRUPTION PHENOTYPE</scope>
    <scope>TISSUE SPECIFICITY</scope>
</reference>
<accession>Q9VD73</accession>
<accession>A9UNC5</accession>
<accession>Q24166</accession>
<accession>Q8T0Q9</accession>